<comment type="function">
    <text>Component of the zona pellucida, an extracellular matrix surrounding oocytes which mediates sperm binding, induction of the acrosome reaction and prevents post-fertilization polyspermy. The zona pellucida is composed of 3 to 4 glycoproteins, ZP1, ZP2, ZP3, and ZP4. ZP3 is essential for sperm binding and zona matrix formation.</text>
</comment>
<comment type="subunit">
    <text evidence="2 3">Polymers of ZP2 and ZP3 organized into long filaments cross-linked by ZP1 homodimers. Interacts with ZP1 and ZP2.</text>
</comment>
<comment type="subcellular location">
    <molecule>Processed zona pellucida sperm-binding protein 3</molecule>
    <subcellularLocation>
        <location evidence="3">Zona pellucida</location>
    </subcellularLocation>
</comment>
<comment type="subcellular location">
    <subcellularLocation>
        <location evidence="4">Cell membrane</location>
        <topology evidence="5">Single-pass type I membrane protein</topology>
    </subcellularLocation>
</comment>
<comment type="tissue specificity">
    <text>Expressed in oocytes.</text>
</comment>
<comment type="domain">
    <text>The ZP domain is involved in the polymerization of the ZP proteins to form the zona pellucida.</text>
</comment>
<comment type="PTM">
    <text>Proteolytically cleaved before the transmembrane segment to yield the secreted ectodomain incorporated in the zona pellucida.</text>
</comment>
<comment type="PTM">
    <text evidence="1">N-glycosylated.</text>
</comment>
<comment type="PTM">
    <text evidence="1">O-glycosylated; removal of O-linked glycans may play an important role in the post-fertilization block to polyspermy.</text>
</comment>
<comment type="similarity">
    <text evidence="7">Belongs to the ZP domain family. ZPC subfamily.</text>
</comment>
<comment type="online information" name="Protein Spotlight">
    <link uri="https://www.proteinspotlight.org/back_issues/093"/>
    <text>Molecular chastity - Issue 93 of April 2008</text>
</comment>
<sequence length="424" mass="46854">MGLSYGLFICFLLWAGTGLCYPPTTTEDKTHPSLPSSPSVVVECRHAWLVVNVSKNLFGTGRLVRPADLTLGPENCEPLISGDSDDTVRFEVELHKCGNSVQVTEDALVYSTFLLHNPRPMGNLSILRTNRAEVPIECRYPRHSNVSSEAILPTWVPFRTTMLSEEKLAFSLRLMEEDWGSEKQSPTFQLGDLAHLQAEVHTGRHIPLRLFVDYCVATLTPDQNASPHHTIVDFHGCLVDGLSDASSAFKAPRPRPETLQFTVDTFHFANDPRNMIYITCHLKVTPASRVPDQLNKACSFIKSSNRWFPVEGPADICNCCNKGSCGLQGRSWRLSHLDRPWHKMASRNRRHVTEEADITVGPLIFLGKAADRGVEGSTSPHTSVMVGIGLATVLSLTLATIVLGLARRHHTASRPMICPVSASQ</sequence>
<feature type="signal peptide" evidence="1">
    <location>
        <begin position="1"/>
        <end position="22"/>
    </location>
</feature>
<feature type="chain" id="PRO_0000041707" description="Zona pellucida sperm-binding protein 3">
    <location>
        <begin position="23"/>
        <end position="348"/>
    </location>
</feature>
<feature type="chain" id="PRO_0000304568" description="Processed zona pellucida sperm-binding protein 3">
    <location>
        <begin position="23"/>
        <end status="unknown"/>
    </location>
</feature>
<feature type="propeptide" id="PRO_0000041708" description="Removed in mature form" evidence="1">
    <location>
        <begin position="349"/>
        <end position="424"/>
    </location>
</feature>
<feature type="topological domain" description="Extracellular" evidence="5">
    <location>
        <begin position="23"/>
        <end position="383"/>
    </location>
</feature>
<feature type="transmembrane region" description="Helical" evidence="5">
    <location>
        <begin position="384"/>
        <end position="404"/>
    </location>
</feature>
<feature type="topological domain" description="Cytoplasmic" evidence="5">
    <location>
        <begin position="405"/>
        <end position="424"/>
    </location>
</feature>
<feature type="domain" description="ZP" evidence="6">
    <location>
        <begin position="43"/>
        <end position="305"/>
    </location>
</feature>
<feature type="glycosylation site" description="N-linked (GlcNAc...) asparagine" evidence="5">
    <location>
        <position position="52"/>
    </location>
</feature>
<feature type="glycosylation site" description="N-linked (GlcNAc...) asparagine" evidence="1">
    <location>
        <position position="123"/>
    </location>
</feature>
<feature type="glycosylation site" description="N-linked (GlcNAc...) asparagine" evidence="1">
    <location>
        <position position="145"/>
    </location>
</feature>
<feature type="glycosylation site" description="O-linked (GalNAc...) threonine" evidence="1">
    <location>
        <position position="154"/>
    </location>
</feature>
<feature type="glycosylation site" description="O-linked (GalNAc...) threonine" evidence="1">
    <location>
        <position position="160"/>
    </location>
</feature>
<feature type="glycosylation site" description="O-linked (GalNAc...) threonine" evidence="1">
    <location>
        <position position="161"/>
    </location>
</feature>
<feature type="disulfide bond" evidence="1">
    <location>
        <begin position="44"/>
        <end position="138"/>
    </location>
</feature>
<feature type="disulfide bond" evidence="1">
    <location>
        <begin position="76"/>
        <end position="97"/>
    </location>
</feature>
<feature type="disulfide bond" evidence="1">
    <location>
        <begin position="215"/>
        <end position="280"/>
    </location>
</feature>
<feature type="disulfide bond" evidence="1">
    <location>
        <begin position="237"/>
        <end position="298"/>
    </location>
</feature>
<feature type="sequence conflict" description="In Ref. 2; BAA08096." evidence="7" ref="2">
    <original>G</original>
    <variation>W</variation>
    <location>
        <position position="72"/>
    </location>
</feature>
<feature type="sequence conflict" description="In Ref. 2; BAA08096." evidence="7" ref="2">
    <original>D</original>
    <variation>Y</variation>
    <location>
        <position position="264"/>
    </location>
</feature>
<evidence type="ECO:0000250" key="1"/>
<evidence type="ECO:0000250" key="2">
    <source>
        <dbReference type="UniProtKB" id="P20239"/>
    </source>
</evidence>
<evidence type="ECO:0000250" key="3">
    <source>
        <dbReference type="UniProtKB" id="P21754"/>
    </source>
</evidence>
<evidence type="ECO:0000250" key="4">
    <source>
        <dbReference type="UniProtKB" id="P48833"/>
    </source>
</evidence>
<evidence type="ECO:0000255" key="5"/>
<evidence type="ECO:0000255" key="6">
    <source>
        <dbReference type="PROSITE-ProRule" id="PRU00375"/>
    </source>
</evidence>
<evidence type="ECO:0000305" key="7"/>
<accession>P48832</accession>
<protein>
    <recommendedName>
        <fullName>Zona pellucida sperm-binding protein 3</fullName>
    </recommendedName>
    <alternativeName>
        <fullName>Sperm receptor</fullName>
    </alternativeName>
    <alternativeName>
        <fullName>Zona pellucida glycoprotein 3</fullName>
        <shortName>Zp-3</shortName>
    </alternativeName>
    <alternativeName>
        <fullName>Zona pellucida protein C</fullName>
    </alternativeName>
    <component>
        <recommendedName>
            <fullName>Processed zona pellucida sperm-binding protein 3</fullName>
        </recommendedName>
    </component>
</protein>
<proteinExistence type="evidence at transcript level"/>
<reference key="1">
    <citation type="journal article" date="1994" name="DNA Seq.">
        <title>Cloning and characterization of zona pellucida genes and cDNAs from a variety of mammalian species: the ZPA, ZPB and ZPC gene families.</title>
        <authorList>
            <person name="Harris J.D."/>
            <person name="Hibler D.W."/>
            <person name="Fontenot G.K."/>
            <person name="Hsu K.T."/>
            <person name="Yurewicz E.C."/>
            <person name="Sacco A.G."/>
        </authorList>
    </citation>
    <scope>NUCLEOTIDE SEQUENCE [MRNA]</scope>
    <source>
        <tissue>Ovary</tissue>
    </source>
</reference>
<reference key="2">
    <citation type="submission" date="1995-01" db="EMBL/GenBank/DDBJ databases">
        <authorList>
            <person name="Okazaki Y."/>
            <person name="Sugimoto M."/>
        </authorList>
    </citation>
    <scope>NUCLEOTIDE SEQUENCE [MRNA]</scope>
    <source>
        <tissue>Ovary</tissue>
    </source>
</reference>
<name>ZP3_FELCA</name>
<gene>
    <name type="primary">ZP3</name>
    <name type="synonym">ZPC</name>
</gene>
<keyword id="KW-1003">Cell membrane</keyword>
<keyword id="KW-0165">Cleavage on pair of basic residues</keyword>
<keyword id="KW-1015">Disulfide bond</keyword>
<keyword id="KW-0272">Extracellular matrix</keyword>
<keyword id="KW-0278">Fertilization</keyword>
<keyword id="KW-0325">Glycoprotein</keyword>
<keyword id="KW-0472">Membrane</keyword>
<keyword id="KW-0675">Receptor</keyword>
<keyword id="KW-1185">Reference proteome</keyword>
<keyword id="KW-0964">Secreted</keyword>
<keyword id="KW-0732">Signal</keyword>
<keyword id="KW-0812">Transmembrane</keyword>
<keyword id="KW-1133">Transmembrane helix</keyword>
<dbReference type="EMBL" id="U05778">
    <property type="protein sequence ID" value="AAA74390.1"/>
    <property type="molecule type" value="mRNA"/>
</dbReference>
<dbReference type="EMBL" id="D45068">
    <property type="protein sequence ID" value="BAA08096.1"/>
    <property type="molecule type" value="mRNA"/>
</dbReference>
<dbReference type="PIR" id="S70399">
    <property type="entry name" value="S70399"/>
</dbReference>
<dbReference type="RefSeq" id="NP_001009330.1">
    <property type="nucleotide sequence ID" value="NM_001009330.2"/>
</dbReference>
<dbReference type="SMR" id="P48832"/>
<dbReference type="FunCoup" id="P48832">
    <property type="interactions" value="30"/>
</dbReference>
<dbReference type="STRING" id="9685.ENSFCAP00000012496"/>
<dbReference type="GlyCosmos" id="P48832">
    <property type="glycosylation" value="6 sites, No reported glycans"/>
</dbReference>
<dbReference type="PaxDb" id="9685-ENSFCAP00000012496"/>
<dbReference type="GeneID" id="493925"/>
<dbReference type="KEGG" id="fca:493925"/>
<dbReference type="CTD" id="7784"/>
<dbReference type="eggNOG" id="ENOG502QSZF">
    <property type="taxonomic scope" value="Eukaryota"/>
</dbReference>
<dbReference type="HOGENOM" id="CLU_047091_1_1_1"/>
<dbReference type="InParanoid" id="P48832"/>
<dbReference type="OrthoDB" id="8880842at2759"/>
<dbReference type="Proteomes" id="UP000011712">
    <property type="component" value="Unplaced"/>
</dbReference>
<dbReference type="GO" id="GO:0062023">
    <property type="term" value="C:collagen-containing extracellular matrix"/>
    <property type="evidence" value="ECO:0000250"/>
    <property type="project" value="UniProtKB"/>
</dbReference>
<dbReference type="GO" id="GO:0035805">
    <property type="term" value="C:egg coat"/>
    <property type="evidence" value="ECO:0000250"/>
    <property type="project" value="UniProtKB"/>
</dbReference>
<dbReference type="GO" id="GO:0031012">
    <property type="term" value="C:extracellular matrix"/>
    <property type="evidence" value="ECO:0000318"/>
    <property type="project" value="GO_Central"/>
</dbReference>
<dbReference type="GO" id="GO:0005615">
    <property type="term" value="C:extracellular space"/>
    <property type="evidence" value="ECO:0000250"/>
    <property type="project" value="UniProtKB"/>
</dbReference>
<dbReference type="GO" id="GO:0005886">
    <property type="term" value="C:plasma membrane"/>
    <property type="evidence" value="ECO:0000250"/>
    <property type="project" value="UniProtKB"/>
</dbReference>
<dbReference type="GO" id="GO:0032190">
    <property type="term" value="F:acrosin binding"/>
    <property type="evidence" value="ECO:0000318"/>
    <property type="project" value="GO_Central"/>
</dbReference>
<dbReference type="GO" id="GO:0030246">
    <property type="term" value="F:carbohydrate binding"/>
    <property type="evidence" value="ECO:0000250"/>
    <property type="project" value="UniProtKB"/>
</dbReference>
<dbReference type="GO" id="GO:0048018">
    <property type="term" value="F:receptor ligand activity"/>
    <property type="evidence" value="ECO:0000250"/>
    <property type="project" value="UniProtKB"/>
</dbReference>
<dbReference type="GO" id="GO:0035804">
    <property type="term" value="F:structural constituent of egg coat"/>
    <property type="evidence" value="ECO:0000250"/>
    <property type="project" value="UniProtKB"/>
</dbReference>
<dbReference type="GO" id="GO:0007339">
    <property type="term" value="P:binding of sperm to zona pellucida"/>
    <property type="evidence" value="ECO:0000250"/>
    <property type="project" value="UniProtKB"/>
</dbReference>
<dbReference type="GO" id="GO:0001825">
    <property type="term" value="P:blastocyst formation"/>
    <property type="evidence" value="ECO:0000250"/>
    <property type="project" value="UniProtKB"/>
</dbReference>
<dbReference type="GO" id="GO:0035803">
    <property type="term" value="P:egg coat formation"/>
    <property type="evidence" value="ECO:0000250"/>
    <property type="project" value="UniProtKB"/>
</dbReference>
<dbReference type="GO" id="GO:0002455">
    <property type="term" value="P:humoral immune response mediated by circulating immunoglobulin"/>
    <property type="evidence" value="ECO:0000250"/>
    <property type="project" value="UniProtKB"/>
</dbReference>
<dbReference type="GO" id="GO:2000360">
    <property type="term" value="P:negative regulation of binding of sperm to zona pellucida"/>
    <property type="evidence" value="ECO:0000250"/>
    <property type="project" value="UniProtKB"/>
</dbReference>
<dbReference type="GO" id="GO:0045892">
    <property type="term" value="P:negative regulation of DNA-templated transcription"/>
    <property type="evidence" value="ECO:0000250"/>
    <property type="project" value="UniProtKB"/>
</dbReference>
<dbReference type="GO" id="GO:0048599">
    <property type="term" value="P:oocyte development"/>
    <property type="evidence" value="ECO:0000250"/>
    <property type="project" value="UniProtKB"/>
</dbReference>
<dbReference type="GO" id="GO:2000368">
    <property type="term" value="P:positive regulation of acrosomal vesicle exocytosis"/>
    <property type="evidence" value="ECO:0000250"/>
    <property type="project" value="UniProtKB"/>
</dbReference>
<dbReference type="GO" id="GO:2000344">
    <property type="term" value="P:positive regulation of acrosome reaction"/>
    <property type="evidence" value="ECO:0000250"/>
    <property type="project" value="UniProtKB"/>
</dbReference>
<dbReference type="GO" id="GO:2000388">
    <property type="term" value="P:positive regulation of antral ovarian follicle growth"/>
    <property type="evidence" value="ECO:0000250"/>
    <property type="project" value="UniProtKB"/>
</dbReference>
<dbReference type="GO" id="GO:0045893">
    <property type="term" value="P:positive regulation of DNA-templated transcription"/>
    <property type="evidence" value="ECO:0000250"/>
    <property type="project" value="UniProtKB"/>
</dbReference>
<dbReference type="GO" id="GO:0002922">
    <property type="term" value="P:positive regulation of humoral immune response"/>
    <property type="evidence" value="ECO:0000250"/>
    <property type="project" value="UniProtKB"/>
</dbReference>
<dbReference type="GO" id="GO:0050729">
    <property type="term" value="P:positive regulation of inflammatory response"/>
    <property type="evidence" value="ECO:0000250"/>
    <property type="project" value="UniProtKB"/>
</dbReference>
<dbReference type="GO" id="GO:0032753">
    <property type="term" value="P:positive regulation of interleukin-4 production"/>
    <property type="evidence" value="ECO:0000250"/>
    <property type="project" value="UniProtKB"/>
</dbReference>
<dbReference type="GO" id="GO:0002687">
    <property type="term" value="P:positive regulation of leukocyte migration"/>
    <property type="evidence" value="ECO:0000250"/>
    <property type="project" value="UniProtKB"/>
</dbReference>
<dbReference type="GO" id="GO:2000386">
    <property type="term" value="P:positive regulation of ovarian follicle development"/>
    <property type="evidence" value="ECO:0000250"/>
    <property type="project" value="UniProtKB"/>
</dbReference>
<dbReference type="GO" id="GO:0042102">
    <property type="term" value="P:positive regulation of T cell proliferation"/>
    <property type="evidence" value="ECO:0000250"/>
    <property type="project" value="UniProtKB"/>
</dbReference>
<dbReference type="GO" id="GO:0032729">
    <property type="term" value="P:positive regulation of type II interferon production"/>
    <property type="evidence" value="ECO:0000250"/>
    <property type="project" value="UniProtKB"/>
</dbReference>
<dbReference type="GO" id="GO:0001809">
    <property type="term" value="P:positive regulation of type IV hypersensitivity"/>
    <property type="evidence" value="ECO:0000250"/>
    <property type="project" value="UniProtKB"/>
</dbReference>
<dbReference type="FunFam" id="2.60.40.3210:FF:000001">
    <property type="entry name" value="Zona pellucida sperm-binding protein 3"/>
    <property type="match status" value="1"/>
</dbReference>
<dbReference type="FunFam" id="2.60.40.4100:FF:000002">
    <property type="entry name" value="Zona pellucida sperm-binding protein 3"/>
    <property type="match status" value="1"/>
</dbReference>
<dbReference type="Gene3D" id="2.60.40.4100">
    <property type="entry name" value="Zona pellucida, ZP-C domain"/>
    <property type="match status" value="1"/>
</dbReference>
<dbReference type="Gene3D" id="2.60.40.3210">
    <property type="entry name" value="Zona pellucida, ZP-N domain"/>
    <property type="match status" value="1"/>
</dbReference>
<dbReference type="InterPro" id="IPR055355">
    <property type="entry name" value="ZP-C"/>
</dbReference>
<dbReference type="InterPro" id="IPR042235">
    <property type="entry name" value="ZP-C_dom"/>
</dbReference>
<dbReference type="InterPro" id="IPR055356">
    <property type="entry name" value="ZP-N"/>
</dbReference>
<dbReference type="InterPro" id="IPR048290">
    <property type="entry name" value="ZP_chr"/>
</dbReference>
<dbReference type="InterPro" id="IPR001507">
    <property type="entry name" value="ZP_dom"/>
</dbReference>
<dbReference type="InterPro" id="IPR017977">
    <property type="entry name" value="ZP_dom_CS"/>
</dbReference>
<dbReference type="PANTHER" id="PTHR11576">
    <property type="entry name" value="ZONA PELLUCIDA SPERM-BINDING PROTEIN 3"/>
    <property type="match status" value="1"/>
</dbReference>
<dbReference type="PANTHER" id="PTHR11576:SF2">
    <property type="entry name" value="ZONA PELLUCIDA SPERM-BINDING PROTEIN 3"/>
    <property type="match status" value="1"/>
</dbReference>
<dbReference type="Pfam" id="PF00100">
    <property type="entry name" value="Zona_pellucida"/>
    <property type="match status" value="1"/>
</dbReference>
<dbReference type="Pfam" id="PF23344">
    <property type="entry name" value="ZP-N"/>
    <property type="match status" value="1"/>
</dbReference>
<dbReference type="PRINTS" id="PR00023">
    <property type="entry name" value="ZPELLUCIDA"/>
</dbReference>
<dbReference type="SMART" id="SM00241">
    <property type="entry name" value="ZP"/>
    <property type="match status" value="1"/>
</dbReference>
<dbReference type="PROSITE" id="PS00682">
    <property type="entry name" value="ZP_1"/>
    <property type="match status" value="1"/>
</dbReference>
<dbReference type="PROSITE" id="PS51034">
    <property type="entry name" value="ZP_2"/>
    <property type="match status" value="1"/>
</dbReference>
<organism>
    <name type="scientific">Felis catus</name>
    <name type="common">Cat</name>
    <name type="synonym">Felis silvestris catus</name>
    <dbReference type="NCBI Taxonomy" id="9685"/>
    <lineage>
        <taxon>Eukaryota</taxon>
        <taxon>Metazoa</taxon>
        <taxon>Chordata</taxon>
        <taxon>Craniata</taxon>
        <taxon>Vertebrata</taxon>
        <taxon>Euteleostomi</taxon>
        <taxon>Mammalia</taxon>
        <taxon>Eutheria</taxon>
        <taxon>Laurasiatheria</taxon>
        <taxon>Carnivora</taxon>
        <taxon>Feliformia</taxon>
        <taxon>Felidae</taxon>
        <taxon>Felinae</taxon>
        <taxon>Felis</taxon>
    </lineage>
</organism>